<evidence type="ECO:0000250" key="1"/>
<evidence type="ECO:0000255" key="2"/>
<evidence type="ECO:0000305" key="3"/>
<dbReference type="EMBL" id="CM000129">
    <property type="protein sequence ID" value="EAY93214.1"/>
    <property type="molecule type" value="Genomic_DNA"/>
</dbReference>
<dbReference type="SMR" id="A2XQV4"/>
<dbReference type="STRING" id="39946.A2XQV4"/>
<dbReference type="EnsemblPlants" id="BGIOSGA015973-TA">
    <property type="protein sequence ID" value="BGIOSGA015973-PA"/>
    <property type="gene ID" value="BGIOSGA015973"/>
</dbReference>
<dbReference type="EnsemblPlants" id="OsGoSa_04g0003290.01">
    <property type="protein sequence ID" value="OsGoSa_04g0003290.01"/>
    <property type="gene ID" value="OsGoSa_04g0003290"/>
</dbReference>
<dbReference type="EnsemblPlants" id="OsIR64_04g0003410.01">
    <property type="protein sequence ID" value="OsIR64_04g0003410.01"/>
    <property type="gene ID" value="OsIR64_04g0003410"/>
</dbReference>
<dbReference type="EnsemblPlants" id="OsKYG_04g0003490.01">
    <property type="protein sequence ID" value="OsKYG_04g0003490.01"/>
    <property type="gene ID" value="OsKYG_04g0003490"/>
</dbReference>
<dbReference type="EnsemblPlants" id="OsLiXu_04g0003190.01">
    <property type="protein sequence ID" value="OsLiXu_04g0003190.01"/>
    <property type="gene ID" value="OsLiXu_04g0003190"/>
</dbReference>
<dbReference type="EnsemblPlants" id="OsPr106_04g0003340.01">
    <property type="protein sequence ID" value="OsPr106_04g0003340.01"/>
    <property type="gene ID" value="OsPr106_04g0003340"/>
</dbReference>
<dbReference type="EnsemblPlants" id="OsZS97_04G003340_01">
    <property type="protein sequence ID" value="OsZS97_04G003340_01"/>
    <property type="gene ID" value="OsZS97_04G003340"/>
</dbReference>
<dbReference type="Gramene" id="BGIOSGA015973-TA">
    <property type="protein sequence ID" value="BGIOSGA015973-PA"/>
    <property type="gene ID" value="BGIOSGA015973"/>
</dbReference>
<dbReference type="Gramene" id="OsGoSa_04g0003290.01">
    <property type="protein sequence ID" value="OsGoSa_04g0003290.01"/>
    <property type="gene ID" value="OsGoSa_04g0003290"/>
</dbReference>
<dbReference type="Gramene" id="OsIR64_04g0003410.01">
    <property type="protein sequence ID" value="OsIR64_04g0003410.01"/>
    <property type="gene ID" value="OsIR64_04g0003410"/>
</dbReference>
<dbReference type="Gramene" id="OsKYG_04g0003490.01">
    <property type="protein sequence ID" value="OsKYG_04g0003490.01"/>
    <property type="gene ID" value="OsKYG_04g0003490"/>
</dbReference>
<dbReference type="Gramene" id="OsLiXu_04g0003190.01">
    <property type="protein sequence ID" value="OsLiXu_04g0003190.01"/>
    <property type="gene ID" value="OsLiXu_04g0003190"/>
</dbReference>
<dbReference type="Gramene" id="OsPr106_04g0003340.01">
    <property type="protein sequence ID" value="OsPr106_04g0003340.01"/>
    <property type="gene ID" value="OsPr106_04g0003340"/>
</dbReference>
<dbReference type="Gramene" id="OsZS97_04G003340_01">
    <property type="protein sequence ID" value="OsZS97_04G003340_01"/>
    <property type="gene ID" value="OsZS97_04G003340"/>
</dbReference>
<dbReference type="HOGENOM" id="CLU_060196_0_0_1"/>
<dbReference type="OMA" id="EINQPRI"/>
<dbReference type="OrthoDB" id="276685at2759"/>
<dbReference type="Proteomes" id="UP000007015">
    <property type="component" value="Chromosome 4"/>
</dbReference>
<dbReference type="GO" id="GO:0005759">
    <property type="term" value="C:mitochondrial matrix"/>
    <property type="evidence" value="ECO:0007669"/>
    <property type="project" value="UniProtKB-SubCell"/>
</dbReference>
<dbReference type="GO" id="GO:0009055">
    <property type="term" value="F:electron transfer activity"/>
    <property type="evidence" value="ECO:0007669"/>
    <property type="project" value="InterPro"/>
</dbReference>
<dbReference type="GO" id="GO:0009063">
    <property type="term" value="P:amino acid catabolic process"/>
    <property type="evidence" value="ECO:0007669"/>
    <property type="project" value="TreeGrafter"/>
</dbReference>
<dbReference type="GO" id="GO:0033539">
    <property type="term" value="P:fatty acid beta-oxidation using acyl-CoA dehydrogenase"/>
    <property type="evidence" value="ECO:0007669"/>
    <property type="project" value="TreeGrafter"/>
</dbReference>
<dbReference type="CDD" id="cd01714">
    <property type="entry name" value="ETF_beta"/>
    <property type="match status" value="1"/>
</dbReference>
<dbReference type="FunFam" id="3.40.50.620:FF:000011">
    <property type="entry name" value="Electron transfer flavoprotein subunit beta"/>
    <property type="match status" value="1"/>
</dbReference>
<dbReference type="Gene3D" id="3.40.50.620">
    <property type="entry name" value="HUPs"/>
    <property type="match status" value="1"/>
</dbReference>
<dbReference type="InterPro" id="IPR000049">
    <property type="entry name" value="ET-Flavoprotein_bsu_CS"/>
</dbReference>
<dbReference type="InterPro" id="IPR014730">
    <property type="entry name" value="ETF_a/b_N"/>
</dbReference>
<dbReference type="InterPro" id="IPR012255">
    <property type="entry name" value="ETF_b"/>
</dbReference>
<dbReference type="InterPro" id="IPR033948">
    <property type="entry name" value="ETF_beta_N"/>
</dbReference>
<dbReference type="InterPro" id="IPR014729">
    <property type="entry name" value="Rossmann-like_a/b/a_fold"/>
</dbReference>
<dbReference type="PANTHER" id="PTHR21294">
    <property type="entry name" value="ELECTRON TRANSFER FLAVOPROTEIN BETA-SUBUNIT"/>
    <property type="match status" value="1"/>
</dbReference>
<dbReference type="PANTHER" id="PTHR21294:SF8">
    <property type="entry name" value="ELECTRON TRANSFER FLAVOPROTEIN SUBUNIT BETA"/>
    <property type="match status" value="1"/>
</dbReference>
<dbReference type="Pfam" id="PF01012">
    <property type="entry name" value="ETF"/>
    <property type="match status" value="1"/>
</dbReference>
<dbReference type="PIRSF" id="PIRSF000090">
    <property type="entry name" value="Beta-ETF"/>
    <property type="match status" value="1"/>
</dbReference>
<dbReference type="SMART" id="SM00893">
    <property type="entry name" value="ETF"/>
    <property type="match status" value="1"/>
</dbReference>
<dbReference type="SUPFAM" id="SSF52402">
    <property type="entry name" value="Adenine nucleotide alpha hydrolases-like"/>
    <property type="match status" value="1"/>
</dbReference>
<dbReference type="PROSITE" id="PS01065">
    <property type="entry name" value="ETF_BETA"/>
    <property type="match status" value="1"/>
</dbReference>
<protein>
    <recommendedName>
        <fullName>Electron transfer flavoprotein subunit beta, mitochondrial</fullName>
        <shortName>Beta-ETF</shortName>
    </recommendedName>
</protein>
<comment type="function">
    <text evidence="1">The electron transfer flavoprotein serves as a specific electron acceptor for several dehydrogenases, including five acyl-CoA dehydrogenases, glutaryl-CoA and sarcosine dehydrogenase. It transfers the electrons to the main mitochondrial respiratory chain via ETF-ubiquinone oxidoreductase (ETF dehydrogenase) (By similarity).</text>
</comment>
<comment type="cofactor">
    <cofactor evidence="1">
        <name>FAD</name>
        <dbReference type="ChEBI" id="CHEBI:57692"/>
    </cofactor>
    <text evidence="1">Binds 1 FAD per dimer.</text>
</comment>
<comment type="cofactor">
    <cofactor evidence="1">
        <name>AMP</name>
        <dbReference type="ChEBI" id="CHEBI:456215"/>
    </cofactor>
    <text evidence="1">Binds 1 AMP per subunit.</text>
</comment>
<comment type="subunit">
    <text evidence="1">Heterodimer of an alpha and a beta subunit.</text>
</comment>
<comment type="subcellular location">
    <subcellularLocation>
        <location evidence="1">Mitochondrion matrix</location>
    </subcellularLocation>
</comment>
<comment type="similarity">
    <text evidence="3">Belongs to the ETF beta-subunit/FixA family.</text>
</comment>
<name>ETFB_ORYSI</name>
<proteinExistence type="inferred from homology"/>
<reference key="1">
    <citation type="journal article" date="2005" name="PLoS Biol.">
        <title>The genomes of Oryza sativa: a history of duplications.</title>
        <authorList>
            <person name="Yu J."/>
            <person name="Wang J."/>
            <person name="Lin W."/>
            <person name="Li S."/>
            <person name="Li H."/>
            <person name="Zhou J."/>
            <person name="Ni P."/>
            <person name="Dong W."/>
            <person name="Hu S."/>
            <person name="Zeng C."/>
            <person name="Zhang J."/>
            <person name="Zhang Y."/>
            <person name="Li R."/>
            <person name="Xu Z."/>
            <person name="Li S."/>
            <person name="Li X."/>
            <person name="Zheng H."/>
            <person name="Cong L."/>
            <person name="Lin L."/>
            <person name="Yin J."/>
            <person name="Geng J."/>
            <person name="Li G."/>
            <person name="Shi J."/>
            <person name="Liu J."/>
            <person name="Lv H."/>
            <person name="Li J."/>
            <person name="Wang J."/>
            <person name="Deng Y."/>
            <person name="Ran L."/>
            <person name="Shi X."/>
            <person name="Wang X."/>
            <person name="Wu Q."/>
            <person name="Li C."/>
            <person name="Ren X."/>
            <person name="Wang J."/>
            <person name="Wang X."/>
            <person name="Li D."/>
            <person name="Liu D."/>
            <person name="Zhang X."/>
            <person name="Ji Z."/>
            <person name="Zhao W."/>
            <person name="Sun Y."/>
            <person name="Zhang Z."/>
            <person name="Bao J."/>
            <person name="Han Y."/>
            <person name="Dong L."/>
            <person name="Ji J."/>
            <person name="Chen P."/>
            <person name="Wu S."/>
            <person name="Liu J."/>
            <person name="Xiao Y."/>
            <person name="Bu D."/>
            <person name="Tan J."/>
            <person name="Yang L."/>
            <person name="Ye C."/>
            <person name="Zhang J."/>
            <person name="Xu J."/>
            <person name="Zhou Y."/>
            <person name="Yu Y."/>
            <person name="Zhang B."/>
            <person name="Zhuang S."/>
            <person name="Wei H."/>
            <person name="Liu B."/>
            <person name="Lei M."/>
            <person name="Yu H."/>
            <person name="Li Y."/>
            <person name="Xu H."/>
            <person name="Wei S."/>
            <person name="He X."/>
            <person name="Fang L."/>
            <person name="Zhang Z."/>
            <person name="Zhang Y."/>
            <person name="Huang X."/>
            <person name="Su Z."/>
            <person name="Tong W."/>
            <person name="Li J."/>
            <person name="Tong Z."/>
            <person name="Li S."/>
            <person name="Ye J."/>
            <person name="Wang L."/>
            <person name="Fang L."/>
            <person name="Lei T."/>
            <person name="Chen C.-S."/>
            <person name="Chen H.-C."/>
            <person name="Xu Z."/>
            <person name="Li H."/>
            <person name="Huang H."/>
            <person name="Zhang F."/>
            <person name="Xu H."/>
            <person name="Li N."/>
            <person name="Zhao C."/>
            <person name="Li S."/>
            <person name="Dong L."/>
            <person name="Huang Y."/>
            <person name="Li L."/>
            <person name="Xi Y."/>
            <person name="Qi Q."/>
            <person name="Li W."/>
            <person name="Zhang B."/>
            <person name="Hu W."/>
            <person name="Zhang Y."/>
            <person name="Tian X."/>
            <person name="Jiao Y."/>
            <person name="Liang X."/>
            <person name="Jin J."/>
            <person name="Gao L."/>
            <person name="Zheng W."/>
            <person name="Hao B."/>
            <person name="Liu S.-M."/>
            <person name="Wang W."/>
            <person name="Yuan L."/>
            <person name="Cao M."/>
            <person name="McDermott J."/>
            <person name="Samudrala R."/>
            <person name="Wang J."/>
            <person name="Wong G.K.-S."/>
            <person name="Yang H."/>
        </authorList>
    </citation>
    <scope>NUCLEOTIDE SEQUENCE [LARGE SCALE GENOMIC DNA]</scope>
    <source>
        <strain>cv. 93-11</strain>
    </source>
</reference>
<gene>
    <name type="primary">ETFB</name>
    <name type="ORF">OsI_014447</name>
</gene>
<sequence>MKILVAVKRVVDYAVKVRVRPDRTGVETASVKMSMNPFCEIAVEEALRLREAGAATEVVAATVGPSQSADTLRTALAMGADRAVHVLHDPDPSRPLLPLAVAKILRALALQENPGLVILGKQAIDDDCNQTGQMLAGLLNWPQGTFASKVILNKEKATVEREVDGGIETISLDLPAVITTDLRLNQPRYATLPNIMKAKSKVIKKVTPEDLDVDIRSDMEVVEVTEPPKRKAGVILSSVDELIDRLKNEARVL</sequence>
<feature type="transit peptide" description="Mitochondrion" evidence="2">
    <location>
        <begin position="1"/>
        <end status="unknown"/>
    </location>
</feature>
<feature type="chain" id="PRO_0000324182" description="Electron transfer flavoprotein subunit beta, mitochondrial">
    <location>
        <begin status="unknown"/>
        <end position="253"/>
    </location>
</feature>
<organism>
    <name type="scientific">Oryza sativa subsp. indica</name>
    <name type="common">Rice</name>
    <dbReference type="NCBI Taxonomy" id="39946"/>
    <lineage>
        <taxon>Eukaryota</taxon>
        <taxon>Viridiplantae</taxon>
        <taxon>Streptophyta</taxon>
        <taxon>Embryophyta</taxon>
        <taxon>Tracheophyta</taxon>
        <taxon>Spermatophyta</taxon>
        <taxon>Magnoliopsida</taxon>
        <taxon>Liliopsida</taxon>
        <taxon>Poales</taxon>
        <taxon>Poaceae</taxon>
        <taxon>BOP clade</taxon>
        <taxon>Oryzoideae</taxon>
        <taxon>Oryzeae</taxon>
        <taxon>Oryzinae</taxon>
        <taxon>Oryza</taxon>
        <taxon>Oryza sativa</taxon>
    </lineage>
</organism>
<accession>A2XQV4</accession>
<keyword id="KW-0249">Electron transport</keyword>
<keyword id="KW-0274">FAD</keyword>
<keyword id="KW-0285">Flavoprotein</keyword>
<keyword id="KW-0496">Mitochondrion</keyword>
<keyword id="KW-1185">Reference proteome</keyword>
<keyword id="KW-0809">Transit peptide</keyword>
<keyword id="KW-0813">Transport</keyword>